<feature type="chain" id="PRO_5000098903" description="UPF0756 membrane protein YPTB2779">
    <location>
        <begin position="1"/>
        <end position="150"/>
    </location>
</feature>
<feature type="transmembrane region" description="Helical" evidence="1">
    <location>
        <begin position="16"/>
        <end position="36"/>
    </location>
</feature>
<feature type="transmembrane region" description="Helical" evidence="1">
    <location>
        <begin position="51"/>
        <end position="71"/>
    </location>
</feature>
<feature type="transmembrane region" description="Helical" evidence="1">
    <location>
        <begin position="88"/>
        <end position="108"/>
    </location>
</feature>
<feature type="transmembrane region" description="Helical" evidence="1">
    <location>
        <begin position="114"/>
        <end position="134"/>
    </location>
</feature>
<evidence type="ECO:0000255" key="1">
    <source>
        <dbReference type="HAMAP-Rule" id="MF_01874"/>
    </source>
</evidence>
<keyword id="KW-1003">Cell membrane</keyword>
<keyword id="KW-0472">Membrane</keyword>
<keyword id="KW-0812">Transmembrane</keyword>
<keyword id="KW-1133">Transmembrane helix</keyword>
<proteinExistence type="inferred from homology"/>
<reference key="1">
    <citation type="journal article" date="2004" name="Proc. Natl. Acad. Sci. U.S.A.">
        <title>Insights into the evolution of Yersinia pestis through whole-genome comparison with Yersinia pseudotuberculosis.</title>
        <authorList>
            <person name="Chain P.S.G."/>
            <person name="Carniel E."/>
            <person name="Larimer F.W."/>
            <person name="Lamerdin J."/>
            <person name="Stoutland P.O."/>
            <person name="Regala W.M."/>
            <person name="Georgescu A.M."/>
            <person name="Vergez L.M."/>
            <person name="Land M.L."/>
            <person name="Motin V.L."/>
            <person name="Brubaker R.R."/>
            <person name="Fowler J."/>
            <person name="Hinnebusch J."/>
            <person name="Marceau M."/>
            <person name="Medigue C."/>
            <person name="Simonet M."/>
            <person name="Chenal-Francisque V."/>
            <person name="Souza B."/>
            <person name="Dacheux D."/>
            <person name="Elliott J.M."/>
            <person name="Derbise A."/>
            <person name="Hauser L.J."/>
            <person name="Garcia E."/>
        </authorList>
    </citation>
    <scope>NUCLEOTIDE SEQUENCE [LARGE SCALE GENOMIC DNA]</scope>
    <source>
        <strain>IP32953</strain>
    </source>
</reference>
<organism>
    <name type="scientific">Yersinia pseudotuberculosis serotype I (strain IP32953)</name>
    <dbReference type="NCBI Taxonomy" id="273123"/>
    <lineage>
        <taxon>Bacteria</taxon>
        <taxon>Pseudomonadati</taxon>
        <taxon>Pseudomonadota</taxon>
        <taxon>Gammaproteobacteria</taxon>
        <taxon>Enterobacterales</taxon>
        <taxon>Yersiniaceae</taxon>
        <taxon>Yersinia</taxon>
    </lineage>
</organism>
<accession>Q668G1</accession>
<name>Y2779_YERPS</name>
<gene>
    <name type="ordered locus">YPTB2779</name>
</gene>
<protein>
    <recommendedName>
        <fullName evidence="1">UPF0756 membrane protein YPTB2779</fullName>
    </recommendedName>
</protein>
<sequence length="150" mass="15409">MAALDPTLLILLALAALGILSHNMTVTLAILILIAIRITPLNSFFPWVEKYGLTIGVLILTIGVMAPIASGKISASEVLHSFVQWKSILAIVVGVAVSWLGGRGVSLMTHQPSVVAGLLVGTVLGVALFKGVPVGPLIAAGLLSLVIGKS</sequence>
<comment type="subcellular location">
    <subcellularLocation>
        <location evidence="1">Cell membrane</location>
        <topology evidence="1">Multi-pass membrane protein</topology>
    </subcellularLocation>
</comment>
<comment type="similarity">
    <text evidence="1">Belongs to the UPF0756 family.</text>
</comment>
<dbReference type="EMBL" id="BX936398">
    <property type="protein sequence ID" value="CAH22017.1"/>
    <property type="molecule type" value="Genomic_DNA"/>
</dbReference>
<dbReference type="RefSeq" id="WP_002208553.1">
    <property type="nucleotide sequence ID" value="NZ_CP009712.1"/>
</dbReference>
<dbReference type="KEGG" id="ypo:BZ17_3851"/>
<dbReference type="KEGG" id="yps:YPTB2779"/>
<dbReference type="PATRIC" id="fig|273123.14.peg.4042"/>
<dbReference type="Proteomes" id="UP000001011">
    <property type="component" value="Chromosome"/>
</dbReference>
<dbReference type="GO" id="GO:0005886">
    <property type="term" value="C:plasma membrane"/>
    <property type="evidence" value="ECO:0007669"/>
    <property type="project" value="UniProtKB-SubCell"/>
</dbReference>
<dbReference type="HAMAP" id="MF_01874">
    <property type="entry name" value="UPF0756"/>
    <property type="match status" value="1"/>
</dbReference>
<dbReference type="InterPro" id="IPR007382">
    <property type="entry name" value="UPF0756_TM"/>
</dbReference>
<dbReference type="PANTHER" id="PTHR38452">
    <property type="entry name" value="UPF0756 MEMBRANE PROTEIN YEAL"/>
    <property type="match status" value="1"/>
</dbReference>
<dbReference type="PANTHER" id="PTHR38452:SF1">
    <property type="entry name" value="UPF0756 MEMBRANE PROTEIN YEAL"/>
    <property type="match status" value="1"/>
</dbReference>
<dbReference type="Pfam" id="PF04284">
    <property type="entry name" value="DUF441"/>
    <property type="match status" value="1"/>
</dbReference>